<protein>
    <recommendedName>
        <fullName>Uncharacterized oxidoreductase MW2403</fullName>
        <ecNumber>1.-.-.-</ecNumber>
    </recommendedName>
</protein>
<name>Y2403_STAAW</name>
<reference key="1">
    <citation type="journal article" date="2002" name="Lancet">
        <title>Genome and virulence determinants of high virulence community-acquired MRSA.</title>
        <authorList>
            <person name="Baba T."/>
            <person name="Takeuchi F."/>
            <person name="Kuroda M."/>
            <person name="Yuzawa H."/>
            <person name="Aoki K."/>
            <person name="Oguchi A."/>
            <person name="Nagai Y."/>
            <person name="Iwama N."/>
            <person name="Asano K."/>
            <person name="Naimi T."/>
            <person name="Kuroda H."/>
            <person name="Cui L."/>
            <person name="Yamamoto K."/>
            <person name="Hiramatsu K."/>
        </authorList>
    </citation>
    <scope>NUCLEOTIDE SEQUENCE [LARGE SCALE GENOMIC DNA]</scope>
    <source>
        <strain>MW2</strain>
    </source>
</reference>
<organism>
    <name type="scientific">Staphylococcus aureus (strain MW2)</name>
    <dbReference type="NCBI Taxonomy" id="196620"/>
    <lineage>
        <taxon>Bacteria</taxon>
        <taxon>Bacillati</taxon>
        <taxon>Bacillota</taxon>
        <taxon>Bacilli</taxon>
        <taxon>Bacillales</taxon>
        <taxon>Staphylococcaceae</taxon>
        <taxon>Staphylococcus</taxon>
    </lineage>
</organism>
<gene>
    <name type="ordered locus">MW2403</name>
</gene>
<accession>Q8NUV9</accession>
<comment type="similarity">
    <text evidence="2">Belongs to the short-chain dehydrogenases/reductases (SDR) family.</text>
</comment>
<proteinExistence type="inferred from homology"/>
<feature type="chain" id="PRO_0000300474" description="Uncharacterized oxidoreductase MW2403">
    <location>
        <begin position="1"/>
        <end position="231"/>
    </location>
</feature>
<feature type="active site" description="Proton acceptor" evidence="1">
    <location>
        <position position="153"/>
    </location>
</feature>
<feature type="binding site" evidence="1">
    <location>
        <begin position="10"/>
        <end position="34"/>
    </location>
    <ligand>
        <name>NADP(+)</name>
        <dbReference type="ChEBI" id="CHEBI:58349"/>
    </ligand>
</feature>
<feature type="binding site" evidence="1">
    <location>
        <position position="140"/>
    </location>
    <ligand>
        <name>substrate</name>
    </ligand>
</feature>
<dbReference type="EC" id="1.-.-.-"/>
<dbReference type="EMBL" id="BA000033">
    <property type="protein sequence ID" value="BAB96268.1"/>
    <property type="molecule type" value="Genomic_DNA"/>
</dbReference>
<dbReference type="RefSeq" id="WP_000217458.1">
    <property type="nucleotide sequence ID" value="NC_003923.1"/>
</dbReference>
<dbReference type="SMR" id="Q8NUV9"/>
<dbReference type="KEGG" id="sam:MW2403"/>
<dbReference type="HOGENOM" id="CLU_010194_2_10_9"/>
<dbReference type="GO" id="GO:0016491">
    <property type="term" value="F:oxidoreductase activity"/>
    <property type="evidence" value="ECO:0007669"/>
    <property type="project" value="UniProtKB-KW"/>
</dbReference>
<dbReference type="CDD" id="cd05233">
    <property type="entry name" value="SDR_c"/>
    <property type="match status" value="1"/>
</dbReference>
<dbReference type="FunFam" id="3.40.50.720:FF:000047">
    <property type="entry name" value="NADP-dependent L-serine/L-allo-threonine dehydrogenase"/>
    <property type="match status" value="1"/>
</dbReference>
<dbReference type="Gene3D" id="3.40.50.720">
    <property type="entry name" value="NAD(P)-binding Rossmann-like Domain"/>
    <property type="match status" value="1"/>
</dbReference>
<dbReference type="InterPro" id="IPR036291">
    <property type="entry name" value="NAD(P)-bd_dom_sf"/>
</dbReference>
<dbReference type="InterPro" id="IPR002347">
    <property type="entry name" value="SDR_fam"/>
</dbReference>
<dbReference type="PANTHER" id="PTHR43115">
    <property type="entry name" value="DEHYDROGENASE/REDUCTASE SDR FAMILY MEMBER 11"/>
    <property type="match status" value="1"/>
</dbReference>
<dbReference type="PANTHER" id="PTHR43115:SF4">
    <property type="entry name" value="DEHYDROGENASE_REDUCTASE SDR FAMILY MEMBER 11"/>
    <property type="match status" value="1"/>
</dbReference>
<dbReference type="Pfam" id="PF00106">
    <property type="entry name" value="adh_short"/>
    <property type="match status" value="1"/>
</dbReference>
<dbReference type="PRINTS" id="PR00081">
    <property type="entry name" value="GDHRDH"/>
</dbReference>
<dbReference type="PRINTS" id="PR00080">
    <property type="entry name" value="SDRFAMILY"/>
</dbReference>
<dbReference type="SUPFAM" id="SSF51735">
    <property type="entry name" value="NAD(P)-binding Rossmann-fold domains"/>
    <property type="match status" value="1"/>
</dbReference>
<evidence type="ECO:0000250" key="1"/>
<evidence type="ECO:0000305" key="2"/>
<sequence length="231" mass="24577">MTVLTDKIAVVTGAGSGIGEAIATLLHEEGAKVVLAGRNKEKLQNVANQLSQDSVKVVPTDVTNKEEVDELIKIAQQTFGGLDIVINSAGQMLSSKITDYQVDEWDSMIDVNIKGTLYTVQAALPTMLEQSSGHLINIASISGFEVTKSSTIYSATKAAVHTITQGLEKELAKTGVKVTSISPGMVDTAITAAYNPSDRKKLDPQDIAEAVLYALTQPSHVNVNEITVRPV</sequence>
<keyword id="KW-0560">Oxidoreductase</keyword>